<protein>
    <recommendedName>
        <fullName evidence="1">Acetylglutamate kinase</fullName>
        <ecNumber evidence="1">2.7.2.8</ecNumber>
    </recommendedName>
    <alternativeName>
        <fullName evidence="1">N-acetyl-L-glutamate 5-phosphotransferase</fullName>
    </alternativeName>
    <alternativeName>
        <fullName evidence="1">NAG kinase</fullName>
        <shortName evidence="1">NAGK</shortName>
    </alternativeName>
</protein>
<organism>
    <name type="scientific">Staphylococcus aureus (strain bovine RF122 / ET3-1)</name>
    <dbReference type="NCBI Taxonomy" id="273036"/>
    <lineage>
        <taxon>Bacteria</taxon>
        <taxon>Bacillati</taxon>
        <taxon>Bacillota</taxon>
        <taxon>Bacilli</taxon>
        <taxon>Bacillales</taxon>
        <taxon>Staphylococcaceae</taxon>
        <taxon>Staphylococcus</taxon>
    </lineage>
</organism>
<reference key="1">
    <citation type="journal article" date="2007" name="PLoS ONE">
        <title>Molecular correlates of host specialization in Staphylococcus aureus.</title>
        <authorList>
            <person name="Herron-Olson L."/>
            <person name="Fitzgerald J.R."/>
            <person name="Musser J.M."/>
            <person name="Kapur V."/>
        </authorList>
    </citation>
    <scope>NUCLEOTIDE SEQUENCE [LARGE SCALE GENOMIC DNA]</scope>
    <source>
        <strain>bovine RF122 / ET3-1</strain>
    </source>
</reference>
<accession>Q2YUZ7</accession>
<comment type="function">
    <text evidence="1">Catalyzes the ATP-dependent phosphorylation of N-acetyl-L-glutamate.</text>
</comment>
<comment type="catalytic activity">
    <reaction evidence="1">
        <text>N-acetyl-L-glutamate + ATP = N-acetyl-L-glutamyl 5-phosphate + ADP</text>
        <dbReference type="Rhea" id="RHEA:14629"/>
        <dbReference type="ChEBI" id="CHEBI:30616"/>
        <dbReference type="ChEBI" id="CHEBI:44337"/>
        <dbReference type="ChEBI" id="CHEBI:57936"/>
        <dbReference type="ChEBI" id="CHEBI:456216"/>
        <dbReference type="EC" id="2.7.2.8"/>
    </reaction>
</comment>
<comment type="pathway">
    <text evidence="1">Amino-acid biosynthesis; L-arginine biosynthesis; N(2)-acetyl-L-ornithine from L-glutamate: step 2/4.</text>
</comment>
<comment type="subcellular location">
    <subcellularLocation>
        <location evidence="1">Cytoplasm</location>
    </subcellularLocation>
</comment>
<comment type="similarity">
    <text evidence="1">Belongs to the acetylglutamate kinase family. ArgB subfamily.</text>
</comment>
<evidence type="ECO:0000255" key="1">
    <source>
        <dbReference type="HAMAP-Rule" id="MF_00082"/>
    </source>
</evidence>
<sequence length="256" mass="27969">MKFIVIKIGGSTLSDMHPSIINNIKHLRSNNIYPIIVHGGGPFINEALSNQQIEPHFVNGLRVTDKATMTITKHTLIADVNTALVAQFNQHQCSAIGLCGLDAQLFEIKRFDQQYGYVGVPTTLNIDSLSYLCTKFVPIINSIGFNNHDGEFYNINADTLAYFIAASLEAPIYVLSNIAGVLINDVVIPQLPLADINQYIEHGDIYGGMIPKVLDAKNAIENGCPKVIIASGNKPNIIEAIYNNDFVGTTILKSLV</sequence>
<gene>
    <name evidence="1" type="primary">argB</name>
    <name type="ordered locus">SAB0122c</name>
</gene>
<proteinExistence type="inferred from homology"/>
<keyword id="KW-0028">Amino-acid biosynthesis</keyword>
<keyword id="KW-0055">Arginine biosynthesis</keyword>
<keyword id="KW-0067">ATP-binding</keyword>
<keyword id="KW-0963">Cytoplasm</keyword>
<keyword id="KW-0418">Kinase</keyword>
<keyword id="KW-0547">Nucleotide-binding</keyword>
<keyword id="KW-0808">Transferase</keyword>
<name>ARGB_STAAB</name>
<feature type="chain" id="PRO_0000264765" description="Acetylglutamate kinase">
    <location>
        <begin position="1"/>
        <end position="256"/>
    </location>
</feature>
<feature type="binding site" evidence="1">
    <location>
        <begin position="40"/>
        <end position="41"/>
    </location>
    <ligand>
        <name>substrate</name>
    </ligand>
</feature>
<feature type="binding site" evidence="1">
    <location>
        <position position="62"/>
    </location>
    <ligand>
        <name>substrate</name>
    </ligand>
</feature>
<feature type="binding site" evidence="1">
    <location>
        <position position="154"/>
    </location>
    <ligand>
        <name>substrate</name>
    </ligand>
</feature>
<feature type="site" description="Transition state stabilizer" evidence="1">
    <location>
        <position position="7"/>
    </location>
</feature>
<feature type="site" description="Transition state stabilizer" evidence="1">
    <location>
        <position position="212"/>
    </location>
</feature>
<dbReference type="EC" id="2.7.2.8" evidence="1"/>
<dbReference type="EMBL" id="AJ938182">
    <property type="protein sequence ID" value="CAI79810.1"/>
    <property type="molecule type" value="Genomic_DNA"/>
</dbReference>
<dbReference type="RefSeq" id="WP_000668890.1">
    <property type="nucleotide sequence ID" value="NC_007622.1"/>
</dbReference>
<dbReference type="SMR" id="Q2YUZ7"/>
<dbReference type="KEGG" id="sab:SAB0122c"/>
<dbReference type="HOGENOM" id="CLU_053680_1_0_9"/>
<dbReference type="UniPathway" id="UPA00068">
    <property type="reaction ID" value="UER00107"/>
</dbReference>
<dbReference type="GO" id="GO:0005737">
    <property type="term" value="C:cytoplasm"/>
    <property type="evidence" value="ECO:0007669"/>
    <property type="project" value="UniProtKB-SubCell"/>
</dbReference>
<dbReference type="GO" id="GO:0003991">
    <property type="term" value="F:acetylglutamate kinase activity"/>
    <property type="evidence" value="ECO:0007669"/>
    <property type="project" value="UniProtKB-UniRule"/>
</dbReference>
<dbReference type="GO" id="GO:0005524">
    <property type="term" value="F:ATP binding"/>
    <property type="evidence" value="ECO:0007669"/>
    <property type="project" value="UniProtKB-UniRule"/>
</dbReference>
<dbReference type="GO" id="GO:0042450">
    <property type="term" value="P:arginine biosynthetic process via ornithine"/>
    <property type="evidence" value="ECO:0007669"/>
    <property type="project" value="UniProtKB-UniRule"/>
</dbReference>
<dbReference type="GO" id="GO:0006526">
    <property type="term" value="P:L-arginine biosynthetic process"/>
    <property type="evidence" value="ECO:0007669"/>
    <property type="project" value="UniProtKB-UniPathway"/>
</dbReference>
<dbReference type="CDD" id="cd04238">
    <property type="entry name" value="AAK_NAGK-like"/>
    <property type="match status" value="1"/>
</dbReference>
<dbReference type="FunFam" id="3.40.1160.10:FF:000037">
    <property type="entry name" value="Acetylglutamate kinase"/>
    <property type="match status" value="1"/>
</dbReference>
<dbReference type="Gene3D" id="3.40.1160.10">
    <property type="entry name" value="Acetylglutamate kinase-like"/>
    <property type="match status" value="1"/>
</dbReference>
<dbReference type="HAMAP" id="MF_00082">
    <property type="entry name" value="ArgB"/>
    <property type="match status" value="1"/>
</dbReference>
<dbReference type="InterPro" id="IPR036393">
    <property type="entry name" value="AceGlu_kinase-like_sf"/>
</dbReference>
<dbReference type="InterPro" id="IPR004662">
    <property type="entry name" value="AcgluKinase_fam"/>
</dbReference>
<dbReference type="InterPro" id="IPR037528">
    <property type="entry name" value="ArgB"/>
</dbReference>
<dbReference type="InterPro" id="IPR001048">
    <property type="entry name" value="Asp/Glu/Uridylate_kinase"/>
</dbReference>
<dbReference type="NCBIfam" id="TIGR00761">
    <property type="entry name" value="argB"/>
    <property type="match status" value="1"/>
</dbReference>
<dbReference type="PANTHER" id="PTHR23342">
    <property type="entry name" value="N-ACETYLGLUTAMATE SYNTHASE"/>
    <property type="match status" value="1"/>
</dbReference>
<dbReference type="PANTHER" id="PTHR23342:SF0">
    <property type="entry name" value="N-ACETYLGLUTAMATE SYNTHASE, MITOCHONDRIAL"/>
    <property type="match status" value="1"/>
</dbReference>
<dbReference type="Pfam" id="PF00696">
    <property type="entry name" value="AA_kinase"/>
    <property type="match status" value="1"/>
</dbReference>
<dbReference type="PIRSF" id="PIRSF000728">
    <property type="entry name" value="NAGK"/>
    <property type="match status" value="1"/>
</dbReference>
<dbReference type="SUPFAM" id="SSF53633">
    <property type="entry name" value="Carbamate kinase-like"/>
    <property type="match status" value="1"/>
</dbReference>